<proteinExistence type="inferred from homology"/>
<name>NQRD_SHEB9</name>
<protein>
    <recommendedName>
        <fullName evidence="1">Na(+)-translocating NADH-quinone reductase subunit D</fullName>
        <shortName evidence="1">Na(+)-NQR subunit D</shortName>
        <shortName evidence="1">Na(+)-translocating NQR subunit D</shortName>
        <ecNumber evidence="1">7.2.1.1</ecNumber>
    </recommendedName>
    <alternativeName>
        <fullName evidence="1">NQR complex subunit D</fullName>
    </alternativeName>
    <alternativeName>
        <fullName evidence="1">NQR-1 subunit D</fullName>
    </alternativeName>
</protein>
<organism>
    <name type="scientific">Shewanella baltica (strain OS195)</name>
    <dbReference type="NCBI Taxonomy" id="399599"/>
    <lineage>
        <taxon>Bacteria</taxon>
        <taxon>Pseudomonadati</taxon>
        <taxon>Pseudomonadota</taxon>
        <taxon>Gammaproteobacteria</taxon>
        <taxon>Alteromonadales</taxon>
        <taxon>Shewanellaceae</taxon>
        <taxon>Shewanella</taxon>
    </lineage>
</organism>
<dbReference type="EC" id="7.2.1.1" evidence="1"/>
<dbReference type="EMBL" id="CP000891">
    <property type="protein sequence ID" value="ABX50722.1"/>
    <property type="molecule type" value="Genomic_DNA"/>
</dbReference>
<dbReference type="RefSeq" id="WP_006080467.1">
    <property type="nucleotide sequence ID" value="NC_009997.1"/>
</dbReference>
<dbReference type="SMR" id="A9L0U1"/>
<dbReference type="KEGG" id="sbn:Sbal195_3560"/>
<dbReference type="HOGENOM" id="CLU_046659_1_1_6"/>
<dbReference type="Proteomes" id="UP000000770">
    <property type="component" value="Chromosome"/>
</dbReference>
<dbReference type="GO" id="GO:0005886">
    <property type="term" value="C:plasma membrane"/>
    <property type="evidence" value="ECO:0007669"/>
    <property type="project" value="UniProtKB-SubCell"/>
</dbReference>
<dbReference type="GO" id="GO:0016655">
    <property type="term" value="F:oxidoreductase activity, acting on NAD(P)H, quinone or similar compound as acceptor"/>
    <property type="evidence" value="ECO:0007669"/>
    <property type="project" value="UniProtKB-UniRule"/>
</dbReference>
<dbReference type="GO" id="GO:0006814">
    <property type="term" value="P:sodium ion transport"/>
    <property type="evidence" value="ECO:0007669"/>
    <property type="project" value="UniProtKB-UniRule"/>
</dbReference>
<dbReference type="HAMAP" id="MF_00428">
    <property type="entry name" value="NqrD"/>
    <property type="match status" value="1"/>
</dbReference>
<dbReference type="InterPro" id="IPR011292">
    <property type="entry name" value="NqrD"/>
</dbReference>
<dbReference type="InterPro" id="IPR003667">
    <property type="entry name" value="NqrDE/RnfAE"/>
</dbReference>
<dbReference type="NCBIfam" id="TIGR01939">
    <property type="entry name" value="nqrD"/>
    <property type="match status" value="1"/>
</dbReference>
<dbReference type="NCBIfam" id="NF006777">
    <property type="entry name" value="PRK09292.1"/>
    <property type="match status" value="1"/>
</dbReference>
<dbReference type="NCBIfam" id="NF009070">
    <property type="entry name" value="PRK12405.1"/>
    <property type="match status" value="1"/>
</dbReference>
<dbReference type="PANTHER" id="PTHR30586">
    <property type="entry name" value="ELECTRON TRANSPORT COMPLEX PROTEIN RNFE"/>
    <property type="match status" value="1"/>
</dbReference>
<dbReference type="PANTHER" id="PTHR30586:SF1">
    <property type="entry name" value="NA(+)-TRANSLOCATING NADH-QUINONE REDUCTASE SUBUNIT D"/>
    <property type="match status" value="1"/>
</dbReference>
<dbReference type="Pfam" id="PF02508">
    <property type="entry name" value="Rnf-Nqr"/>
    <property type="match status" value="1"/>
</dbReference>
<dbReference type="PIRSF" id="PIRSF006102">
    <property type="entry name" value="NQR_DE"/>
    <property type="match status" value="1"/>
</dbReference>
<keyword id="KW-0997">Cell inner membrane</keyword>
<keyword id="KW-1003">Cell membrane</keyword>
<keyword id="KW-0406">Ion transport</keyword>
<keyword id="KW-0472">Membrane</keyword>
<keyword id="KW-0520">NAD</keyword>
<keyword id="KW-0915">Sodium</keyword>
<keyword id="KW-0739">Sodium transport</keyword>
<keyword id="KW-1278">Translocase</keyword>
<keyword id="KW-0812">Transmembrane</keyword>
<keyword id="KW-1133">Transmembrane helix</keyword>
<keyword id="KW-0813">Transport</keyword>
<keyword id="KW-0830">Ubiquinone</keyword>
<comment type="function">
    <text evidence="1">NQR complex catalyzes the reduction of ubiquinone-1 to ubiquinol by two successive reactions, coupled with the transport of Na(+) ions from the cytoplasm to the periplasm. NqrA to NqrE are probably involved in the second step, the conversion of ubisemiquinone to ubiquinol.</text>
</comment>
<comment type="catalytic activity">
    <reaction evidence="1">
        <text>a ubiquinone + n Na(+)(in) + NADH + H(+) = a ubiquinol + n Na(+)(out) + NAD(+)</text>
        <dbReference type="Rhea" id="RHEA:47748"/>
        <dbReference type="Rhea" id="RHEA-COMP:9565"/>
        <dbReference type="Rhea" id="RHEA-COMP:9566"/>
        <dbReference type="ChEBI" id="CHEBI:15378"/>
        <dbReference type="ChEBI" id="CHEBI:16389"/>
        <dbReference type="ChEBI" id="CHEBI:17976"/>
        <dbReference type="ChEBI" id="CHEBI:29101"/>
        <dbReference type="ChEBI" id="CHEBI:57540"/>
        <dbReference type="ChEBI" id="CHEBI:57945"/>
        <dbReference type="EC" id="7.2.1.1"/>
    </reaction>
</comment>
<comment type="subunit">
    <text evidence="1">Composed of six subunits; NqrA, NqrB, NqrC, NqrD, NqrE and NqrF.</text>
</comment>
<comment type="subcellular location">
    <subcellularLocation>
        <location evidence="1">Cell inner membrane</location>
        <topology evidence="1">Multi-pass membrane protein</topology>
    </subcellularLocation>
</comment>
<comment type="similarity">
    <text evidence="1">Belongs to the NqrDE/RnfAE family.</text>
</comment>
<reference key="1">
    <citation type="submission" date="2007-11" db="EMBL/GenBank/DDBJ databases">
        <title>Complete sequence of chromosome of Shewanella baltica OS195.</title>
        <authorList>
            <consortium name="US DOE Joint Genome Institute"/>
            <person name="Copeland A."/>
            <person name="Lucas S."/>
            <person name="Lapidus A."/>
            <person name="Barry K."/>
            <person name="Glavina del Rio T."/>
            <person name="Dalin E."/>
            <person name="Tice H."/>
            <person name="Pitluck S."/>
            <person name="Chain P."/>
            <person name="Malfatti S."/>
            <person name="Shin M."/>
            <person name="Vergez L."/>
            <person name="Schmutz J."/>
            <person name="Larimer F."/>
            <person name="Land M."/>
            <person name="Hauser L."/>
            <person name="Kyrpides N."/>
            <person name="Kim E."/>
            <person name="Brettar I."/>
            <person name="Rodrigues J."/>
            <person name="Konstantinidis K."/>
            <person name="Klappenbach J."/>
            <person name="Hofle M."/>
            <person name="Tiedje J."/>
            <person name="Richardson P."/>
        </authorList>
    </citation>
    <scope>NUCLEOTIDE SEQUENCE [LARGE SCALE GENOMIC DNA]</scope>
    <source>
        <strain>OS195</strain>
    </source>
</reference>
<sequence>MSDAKELKQVLTGPIVNNNPIALQVLGVCSALAVTSKLETALVMALALTAVTAFSNLFISMIRNHIPSSVRIIVQMTIIASLVIVVDQLLQAYAYQISKQLSVFVGLIITNCIVMGRAEAYAMKTPPMMSFMDGIGNGLGYGAILLAVGFVRELFGNGSLFGVEILHKISDGGWYQPNGLLLLPPSAFFLIGVLIWIIRTYKPEQVEAKG</sequence>
<feature type="chain" id="PRO_1000080567" description="Na(+)-translocating NADH-quinone reductase subunit D">
    <location>
        <begin position="1"/>
        <end position="210"/>
    </location>
</feature>
<feature type="transmembrane region" description="Helical" evidence="1">
    <location>
        <begin position="14"/>
        <end position="34"/>
    </location>
</feature>
<feature type="transmembrane region" description="Helical" evidence="1">
    <location>
        <begin position="42"/>
        <end position="62"/>
    </location>
</feature>
<feature type="transmembrane region" description="Helical" evidence="1">
    <location>
        <begin position="72"/>
        <end position="92"/>
    </location>
</feature>
<feature type="transmembrane region" description="Helical" evidence="1">
    <location>
        <begin position="103"/>
        <end position="123"/>
    </location>
</feature>
<feature type="transmembrane region" description="Helical" evidence="1">
    <location>
        <begin position="131"/>
        <end position="151"/>
    </location>
</feature>
<feature type="transmembrane region" description="Helical" evidence="1">
    <location>
        <begin position="178"/>
        <end position="198"/>
    </location>
</feature>
<gene>
    <name evidence="1" type="primary">nqrD</name>
    <name type="ordered locus">Sbal195_3560</name>
</gene>
<evidence type="ECO:0000255" key="1">
    <source>
        <dbReference type="HAMAP-Rule" id="MF_00428"/>
    </source>
</evidence>
<accession>A9L0U1</accession>